<keyword id="KW-0066">ATP synthesis</keyword>
<keyword id="KW-0139">CF(1)</keyword>
<keyword id="KW-0375">Hydrogen ion transport</keyword>
<keyword id="KW-0406">Ion transport</keyword>
<keyword id="KW-0472">Membrane</keyword>
<keyword id="KW-0496">Mitochondrion</keyword>
<keyword id="KW-0999">Mitochondrion inner membrane</keyword>
<keyword id="KW-1185">Reference proteome</keyword>
<keyword id="KW-0809">Transit peptide</keyword>
<keyword id="KW-0813">Transport</keyword>
<organism>
    <name type="scientific">Drosophila melanogaster</name>
    <name type="common">Fruit fly</name>
    <dbReference type="NCBI Taxonomy" id="7227"/>
    <lineage>
        <taxon>Eukaryota</taxon>
        <taxon>Metazoa</taxon>
        <taxon>Ecdysozoa</taxon>
        <taxon>Arthropoda</taxon>
        <taxon>Hexapoda</taxon>
        <taxon>Insecta</taxon>
        <taxon>Pterygota</taxon>
        <taxon>Neoptera</taxon>
        <taxon>Endopterygota</taxon>
        <taxon>Diptera</taxon>
        <taxon>Brachycera</taxon>
        <taxon>Muscomorpha</taxon>
        <taxon>Ephydroidea</taxon>
        <taxon>Drosophilidae</taxon>
        <taxon>Drosophila</taxon>
        <taxon>Sophophora</taxon>
    </lineage>
</organism>
<feature type="transit peptide" description="Mitochondrion" evidence="2">
    <location>
        <begin position="1"/>
        <end status="unknown"/>
    </location>
</feature>
<feature type="chain" id="PRO_0000002688" description="ATP synthase subunit gamma, mitochondrial">
    <location>
        <begin status="unknown"/>
        <end position="297"/>
    </location>
</feature>
<sequence>MMMQRTQLLLPLAMEATMLAQQQRGMATLKMISIRLKSVKNIQKITQSMKMVSAAKYARAERDLKAARPYGIGAQQFFEKTEIQPDEKAEPKKLLIAVTSDRGLCGAVHTGVARLIRGELAQDEANTKVFCVGDKSRAILSRLYGKNILMVANEVGRLPPTFLDASKIANEVLQTGYDYTEGKIVYNRFKSVVSYQCSTLPIFSGSTVEKSEKLAVYDSLDSDVVKSYLEFSLASLIFYTMKEGACSEQSSRMTAMDNASKNAGEMIDKLTLTFNRTRQAVITRELIEIISGAAALT</sequence>
<gene>
    <name evidence="4" type="primary">ATPsyngamma</name>
    <name evidence="4" type="synonym">ATPsyn-gamma</name>
    <name evidence="4" type="ORF">CG7610</name>
</gene>
<accession>O01666</accession>
<accession>A4V3L6</accession>
<accession>Q0KHZ7</accession>
<accession>Q9VAH8</accession>
<name>ATPG_DROME</name>
<comment type="function">
    <text>Mitochondrial membrane ATP synthase (F(1)F(0) ATP synthase or Complex V) produces ATP from ADP in the presence of a proton gradient across the membrane which is generated by electron transport complexes of the respiratory chain. F-type ATPases consist of two structural domains, F(1) - containing the extramembraneous catalytic core, and F(0) - containing the membrane proton channel, linked together by a central stalk and a peripheral stalk. During catalysis, ATP synthesis in the catalytic domain of F(1) is coupled via a rotary mechanism of the central stalk subunits to proton translocation. Part of the complex F(1) domain and the central stalk which is part of the complex rotary element. The gamma subunit protrudes into the catalytic domain formed of alpha(3)beta(3). Rotation of the central stalk against the surrounding alpha(3)beta(3) subunits leads to hydrolysis of ATP in three separate catalytic sites on the beta subunits.</text>
</comment>
<comment type="subunit">
    <text>F-type ATPases have 2 components, CF(1) - the catalytic core - and CF(0) - the membrane proton channel. CF(1) has five subunits: alpha(3), beta(3), gamma(1), delta(1), epsilon(1). CF(0) has three main subunits: a, b and c.</text>
</comment>
<comment type="subcellular location">
    <subcellularLocation>
        <location>Mitochondrion</location>
    </subcellularLocation>
    <subcellularLocation>
        <location evidence="1">Mitochondrion inner membrane</location>
        <topology evidence="1">Peripheral membrane protein</topology>
    </subcellularLocation>
</comment>
<comment type="similarity">
    <text evidence="3">Belongs to the ATPase gamma chain family.</text>
</comment>
<evidence type="ECO:0000250" key="1"/>
<evidence type="ECO:0000255" key="2"/>
<evidence type="ECO:0000305" key="3"/>
<evidence type="ECO:0000312" key="4">
    <source>
        <dbReference type="FlyBase" id="FBgn0020235"/>
    </source>
</evidence>
<proteinExistence type="evidence at transcript level"/>
<dbReference type="EMBL" id="AE014297">
    <property type="protein sequence ID" value="AAN14185.1"/>
    <property type="molecule type" value="Genomic_DNA"/>
</dbReference>
<dbReference type="EMBL" id="AE014297">
    <property type="protein sequence ID" value="AAN14186.1"/>
    <property type="molecule type" value="Genomic_DNA"/>
</dbReference>
<dbReference type="EMBL" id="AY113454">
    <property type="protein sequence ID" value="AAM29459.1"/>
    <property type="molecule type" value="mRNA"/>
</dbReference>
<dbReference type="EMBL" id="Y12701">
    <property type="protein sequence ID" value="CAA73233.1"/>
    <property type="molecule type" value="mRNA"/>
</dbReference>
<dbReference type="RefSeq" id="NP_524550.1">
    <property type="nucleotide sequence ID" value="NM_079826.4"/>
</dbReference>
<dbReference type="RefSeq" id="NP_733304.1">
    <property type="nucleotide sequence ID" value="NM_170425.4"/>
</dbReference>
<dbReference type="RefSeq" id="NP_733305.1">
    <property type="nucleotide sequence ID" value="NM_170426.3"/>
</dbReference>
<dbReference type="SMR" id="O01666"/>
<dbReference type="BioGRID" id="68371">
    <property type="interactions" value="51"/>
</dbReference>
<dbReference type="ComplexPortal" id="CPX-8618">
    <property type="entry name" value="Mitochondrial proton-transporting ATP synthase complex"/>
</dbReference>
<dbReference type="ComplexPortal" id="CPX-8619">
    <property type="entry name" value="Mitochondrial proton-transporting ATP synthase complex, testis-specific variant"/>
</dbReference>
<dbReference type="DIP" id="DIP-23797N"/>
<dbReference type="FunCoup" id="O01666">
    <property type="interactions" value="1522"/>
</dbReference>
<dbReference type="IntAct" id="O01666">
    <property type="interactions" value="41"/>
</dbReference>
<dbReference type="STRING" id="7227.FBpp0084906"/>
<dbReference type="PaxDb" id="7227-FBpp0084907"/>
<dbReference type="DNASU" id="43507"/>
<dbReference type="EnsemblMetazoa" id="FBtr0085539">
    <property type="protein sequence ID" value="FBpp0084905"/>
    <property type="gene ID" value="FBgn0020235"/>
</dbReference>
<dbReference type="EnsemblMetazoa" id="FBtr0085540">
    <property type="protein sequence ID" value="FBpp0084906"/>
    <property type="gene ID" value="FBgn0020235"/>
</dbReference>
<dbReference type="EnsemblMetazoa" id="FBtr0085541">
    <property type="protein sequence ID" value="FBpp0084907"/>
    <property type="gene ID" value="FBgn0020235"/>
</dbReference>
<dbReference type="GeneID" id="43507"/>
<dbReference type="KEGG" id="dme:Dmel_CG7610"/>
<dbReference type="AGR" id="FB:FBgn0020235"/>
<dbReference type="CTD" id="43507"/>
<dbReference type="FlyBase" id="FBgn0020235">
    <property type="gene designation" value="ATPsyngamma"/>
</dbReference>
<dbReference type="VEuPathDB" id="VectorBase:FBgn0020235"/>
<dbReference type="eggNOG" id="KOG1531">
    <property type="taxonomic scope" value="Eukaryota"/>
</dbReference>
<dbReference type="GeneTree" id="ENSGT00390000006837"/>
<dbReference type="HOGENOM" id="CLU_050669_4_0_1"/>
<dbReference type="InParanoid" id="O01666"/>
<dbReference type="OMA" id="MQITSAM"/>
<dbReference type="OrthoDB" id="239812at2759"/>
<dbReference type="PhylomeDB" id="O01666"/>
<dbReference type="Reactome" id="R-DME-163210">
    <property type="pathway name" value="Formation of ATP by chemiosmotic coupling"/>
</dbReference>
<dbReference type="Reactome" id="R-DME-8949613">
    <property type="pathway name" value="Cristae formation"/>
</dbReference>
<dbReference type="Reactome" id="R-DME-9837999">
    <property type="pathway name" value="Mitochondrial protein degradation"/>
</dbReference>
<dbReference type="SignaLink" id="O01666"/>
<dbReference type="BioGRID-ORCS" id="43507">
    <property type="hits" value="0 hits in 1 CRISPR screen"/>
</dbReference>
<dbReference type="ChiTaRS" id="ATPsyngamma">
    <property type="organism name" value="fly"/>
</dbReference>
<dbReference type="GenomeRNAi" id="43507"/>
<dbReference type="PRO" id="PR:O01666"/>
<dbReference type="Proteomes" id="UP000000803">
    <property type="component" value="Chromosome 3R"/>
</dbReference>
<dbReference type="Bgee" id="FBgn0020235">
    <property type="expression patterns" value="Expressed in adult hindgut (Drosophila) and 291 other cell types or tissues"/>
</dbReference>
<dbReference type="GO" id="GO:0005743">
    <property type="term" value="C:mitochondrial inner membrane"/>
    <property type="evidence" value="ECO:0000250"/>
    <property type="project" value="FlyBase"/>
</dbReference>
<dbReference type="GO" id="GO:0005739">
    <property type="term" value="C:mitochondrion"/>
    <property type="evidence" value="ECO:0007005"/>
    <property type="project" value="FlyBase"/>
</dbReference>
<dbReference type="GO" id="GO:0045259">
    <property type="term" value="C:proton-transporting ATP synthase complex"/>
    <property type="evidence" value="ECO:0000250"/>
    <property type="project" value="FlyBase"/>
</dbReference>
<dbReference type="GO" id="GO:0046933">
    <property type="term" value="F:proton-transporting ATP synthase activity, rotational mechanism"/>
    <property type="evidence" value="ECO:0007669"/>
    <property type="project" value="InterPro"/>
</dbReference>
<dbReference type="GO" id="GO:0015986">
    <property type="term" value="P:proton motive force-driven ATP synthesis"/>
    <property type="evidence" value="ECO:0000250"/>
    <property type="project" value="FlyBase"/>
</dbReference>
<dbReference type="CDD" id="cd12151">
    <property type="entry name" value="F1-ATPase_gamma"/>
    <property type="match status" value="1"/>
</dbReference>
<dbReference type="FunFam" id="1.10.287.80:FF:000007">
    <property type="entry name" value="ATP synthase gamma chain"/>
    <property type="match status" value="1"/>
</dbReference>
<dbReference type="FunFam" id="3.40.1380.10:FF:000003">
    <property type="entry name" value="ATP synthase subunit gamma"/>
    <property type="match status" value="1"/>
</dbReference>
<dbReference type="Gene3D" id="3.40.1380.10">
    <property type="match status" value="1"/>
</dbReference>
<dbReference type="Gene3D" id="1.10.287.80">
    <property type="entry name" value="ATP synthase, gamma subunit, helix hairpin domain"/>
    <property type="match status" value="1"/>
</dbReference>
<dbReference type="InterPro" id="IPR035968">
    <property type="entry name" value="ATP_synth_F1_ATPase_gsu"/>
</dbReference>
<dbReference type="InterPro" id="IPR000131">
    <property type="entry name" value="ATP_synth_F1_gsu"/>
</dbReference>
<dbReference type="InterPro" id="IPR023632">
    <property type="entry name" value="ATP_synth_F1_gsu_CS"/>
</dbReference>
<dbReference type="NCBIfam" id="TIGR01146">
    <property type="entry name" value="ATPsyn_F1gamma"/>
    <property type="match status" value="1"/>
</dbReference>
<dbReference type="PANTHER" id="PTHR11693">
    <property type="entry name" value="ATP SYNTHASE GAMMA CHAIN"/>
    <property type="match status" value="1"/>
</dbReference>
<dbReference type="PANTHER" id="PTHR11693:SF22">
    <property type="entry name" value="ATP SYNTHASE SUBUNIT GAMMA, MITOCHONDRIAL"/>
    <property type="match status" value="1"/>
</dbReference>
<dbReference type="Pfam" id="PF00231">
    <property type="entry name" value="ATP-synt"/>
    <property type="match status" value="1"/>
</dbReference>
<dbReference type="PIRSF" id="PIRSF039089">
    <property type="entry name" value="ATP_synthase_gamma"/>
    <property type="match status" value="1"/>
</dbReference>
<dbReference type="PRINTS" id="PR00126">
    <property type="entry name" value="ATPASEGAMMA"/>
</dbReference>
<dbReference type="SUPFAM" id="SSF52943">
    <property type="entry name" value="ATP synthase (F1-ATPase), gamma subunit"/>
    <property type="match status" value="1"/>
</dbReference>
<dbReference type="PROSITE" id="PS00153">
    <property type="entry name" value="ATPASE_GAMMA"/>
    <property type="match status" value="1"/>
</dbReference>
<reference key="1">
    <citation type="journal article" date="2000" name="Science">
        <title>The genome sequence of Drosophila melanogaster.</title>
        <authorList>
            <person name="Adams M.D."/>
            <person name="Celniker S.E."/>
            <person name="Holt R.A."/>
            <person name="Evans C.A."/>
            <person name="Gocayne J.D."/>
            <person name="Amanatides P.G."/>
            <person name="Scherer S.E."/>
            <person name="Li P.W."/>
            <person name="Hoskins R.A."/>
            <person name="Galle R.F."/>
            <person name="George R.A."/>
            <person name="Lewis S.E."/>
            <person name="Richards S."/>
            <person name="Ashburner M."/>
            <person name="Henderson S.N."/>
            <person name="Sutton G.G."/>
            <person name="Wortman J.R."/>
            <person name="Yandell M.D."/>
            <person name="Zhang Q."/>
            <person name="Chen L.X."/>
            <person name="Brandon R.C."/>
            <person name="Rogers Y.-H.C."/>
            <person name="Blazej R.G."/>
            <person name="Champe M."/>
            <person name="Pfeiffer B.D."/>
            <person name="Wan K.H."/>
            <person name="Doyle C."/>
            <person name="Baxter E.G."/>
            <person name="Helt G."/>
            <person name="Nelson C.R."/>
            <person name="Miklos G.L.G."/>
            <person name="Abril J.F."/>
            <person name="Agbayani A."/>
            <person name="An H.-J."/>
            <person name="Andrews-Pfannkoch C."/>
            <person name="Baldwin D."/>
            <person name="Ballew R.M."/>
            <person name="Basu A."/>
            <person name="Baxendale J."/>
            <person name="Bayraktaroglu L."/>
            <person name="Beasley E.M."/>
            <person name="Beeson K.Y."/>
            <person name="Benos P.V."/>
            <person name="Berman B.P."/>
            <person name="Bhandari D."/>
            <person name="Bolshakov S."/>
            <person name="Borkova D."/>
            <person name="Botchan M.R."/>
            <person name="Bouck J."/>
            <person name="Brokstein P."/>
            <person name="Brottier P."/>
            <person name="Burtis K.C."/>
            <person name="Busam D.A."/>
            <person name="Butler H."/>
            <person name="Cadieu E."/>
            <person name="Center A."/>
            <person name="Chandra I."/>
            <person name="Cherry J.M."/>
            <person name="Cawley S."/>
            <person name="Dahlke C."/>
            <person name="Davenport L.B."/>
            <person name="Davies P."/>
            <person name="de Pablos B."/>
            <person name="Delcher A."/>
            <person name="Deng Z."/>
            <person name="Mays A.D."/>
            <person name="Dew I."/>
            <person name="Dietz S.M."/>
            <person name="Dodson K."/>
            <person name="Doup L.E."/>
            <person name="Downes M."/>
            <person name="Dugan-Rocha S."/>
            <person name="Dunkov B.C."/>
            <person name="Dunn P."/>
            <person name="Durbin K.J."/>
            <person name="Evangelista C.C."/>
            <person name="Ferraz C."/>
            <person name="Ferriera S."/>
            <person name="Fleischmann W."/>
            <person name="Fosler C."/>
            <person name="Gabrielian A.E."/>
            <person name="Garg N.S."/>
            <person name="Gelbart W.M."/>
            <person name="Glasser K."/>
            <person name="Glodek A."/>
            <person name="Gong F."/>
            <person name="Gorrell J.H."/>
            <person name="Gu Z."/>
            <person name="Guan P."/>
            <person name="Harris M."/>
            <person name="Harris N.L."/>
            <person name="Harvey D.A."/>
            <person name="Heiman T.J."/>
            <person name="Hernandez J.R."/>
            <person name="Houck J."/>
            <person name="Hostin D."/>
            <person name="Houston K.A."/>
            <person name="Howland T.J."/>
            <person name="Wei M.-H."/>
            <person name="Ibegwam C."/>
            <person name="Jalali M."/>
            <person name="Kalush F."/>
            <person name="Karpen G.H."/>
            <person name="Ke Z."/>
            <person name="Kennison J.A."/>
            <person name="Ketchum K.A."/>
            <person name="Kimmel B.E."/>
            <person name="Kodira C.D."/>
            <person name="Kraft C.L."/>
            <person name="Kravitz S."/>
            <person name="Kulp D."/>
            <person name="Lai Z."/>
            <person name="Lasko P."/>
            <person name="Lei Y."/>
            <person name="Levitsky A.A."/>
            <person name="Li J.H."/>
            <person name="Li Z."/>
            <person name="Liang Y."/>
            <person name="Lin X."/>
            <person name="Liu X."/>
            <person name="Mattei B."/>
            <person name="McIntosh T.C."/>
            <person name="McLeod M.P."/>
            <person name="McPherson D."/>
            <person name="Merkulov G."/>
            <person name="Milshina N.V."/>
            <person name="Mobarry C."/>
            <person name="Morris J."/>
            <person name="Moshrefi A."/>
            <person name="Mount S.M."/>
            <person name="Moy M."/>
            <person name="Murphy B."/>
            <person name="Murphy L."/>
            <person name="Muzny D.M."/>
            <person name="Nelson D.L."/>
            <person name="Nelson D.R."/>
            <person name="Nelson K.A."/>
            <person name="Nixon K."/>
            <person name="Nusskern D.R."/>
            <person name="Pacleb J.M."/>
            <person name="Palazzolo M."/>
            <person name="Pittman G.S."/>
            <person name="Pan S."/>
            <person name="Pollard J."/>
            <person name="Puri V."/>
            <person name="Reese M.G."/>
            <person name="Reinert K."/>
            <person name="Remington K."/>
            <person name="Saunders R.D.C."/>
            <person name="Scheeler F."/>
            <person name="Shen H."/>
            <person name="Shue B.C."/>
            <person name="Siden-Kiamos I."/>
            <person name="Simpson M."/>
            <person name="Skupski M.P."/>
            <person name="Smith T.J."/>
            <person name="Spier E."/>
            <person name="Spradling A.C."/>
            <person name="Stapleton M."/>
            <person name="Strong R."/>
            <person name="Sun E."/>
            <person name="Svirskas R."/>
            <person name="Tector C."/>
            <person name="Turner R."/>
            <person name="Venter E."/>
            <person name="Wang A.H."/>
            <person name="Wang X."/>
            <person name="Wang Z.-Y."/>
            <person name="Wassarman D.A."/>
            <person name="Weinstock G.M."/>
            <person name="Weissenbach J."/>
            <person name="Williams S.M."/>
            <person name="Woodage T."/>
            <person name="Worley K.C."/>
            <person name="Wu D."/>
            <person name="Yang S."/>
            <person name="Yao Q.A."/>
            <person name="Ye J."/>
            <person name="Yeh R.-F."/>
            <person name="Zaveri J.S."/>
            <person name="Zhan M."/>
            <person name="Zhang G."/>
            <person name="Zhao Q."/>
            <person name="Zheng L."/>
            <person name="Zheng X.H."/>
            <person name="Zhong F.N."/>
            <person name="Zhong W."/>
            <person name="Zhou X."/>
            <person name="Zhu S.C."/>
            <person name="Zhu X."/>
            <person name="Smith H.O."/>
            <person name="Gibbs R.A."/>
            <person name="Myers E.W."/>
            <person name="Rubin G.M."/>
            <person name="Venter J.C."/>
        </authorList>
    </citation>
    <scope>NUCLEOTIDE SEQUENCE [LARGE SCALE GENOMIC DNA]</scope>
    <source>
        <strain>Berkeley</strain>
    </source>
</reference>
<reference key="2">
    <citation type="journal article" date="2002" name="Genome Biol.">
        <title>Annotation of the Drosophila melanogaster euchromatic genome: a systematic review.</title>
        <authorList>
            <person name="Misra S."/>
            <person name="Crosby M.A."/>
            <person name="Mungall C.J."/>
            <person name="Matthews B.B."/>
            <person name="Campbell K.S."/>
            <person name="Hradecky P."/>
            <person name="Huang Y."/>
            <person name="Kaminker J.S."/>
            <person name="Millburn G.H."/>
            <person name="Prochnik S.E."/>
            <person name="Smith C.D."/>
            <person name="Tupy J.L."/>
            <person name="Whitfield E.J."/>
            <person name="Bayraktaroglu L."/>
            <person name="Berman B.P."/>
            <person name="Bettencourt B.R."/>
            <person name="Celniker S.E."/>
            <person name="de Grey A.D.N.J."/>
            <person name="Drysdale R.A."/>
            <person name="Harris N.L."/>
            <person name="Richter J."/>
            <person name="Russo S."/>
            <person name="Schroeder A.J."/>
            <person name="Shu S.Q."/>
            <person name="Stapleton M."/>
            <person name="Yamada C."/>
            <person name="Ashburner M."/>
            <person name="Gelbart W.M."/>
            <person name="Rubin G.M."/>
            <person name="Lewis S.E."/>
        </authorList>
    </citation>
    <scope>GENOME REANNOTATION</scope>
    <source>
        <strain>Berkeley</strain>
    </source>
</reference>
<reference key="3">
    <citation type="journal article" date="2002" name="Genome Biol.">
        <title>A Drosophila full-length cDNA resource.</title>
        <authorList>
            <person name="Stapleton M."/>
            <person name="Carlson J.W."/>
            <person name="Brokstein P."/>
            <person name="Yu C."/>
            <person name="Champe M."/>
            <person name="George R.A."/>
            <person name="Guarin H."/>
            <person name="Kronmiller B."/>
            <person name="Pacleb J.M."/>
            <person name="Park S."/>
            <person name="Wan K.H."/>
            <person name="Rubin G.M."/>
            <person name="Celniker S.E."/>
        </authorList>
    </citation>
    <scope>NUCLEOTIDE SEQUENCE [LARGE SCALE MRNA]</scope>
    <source>
        <strain>Berkeley</strain>
        <tissue>Embryo</tissue>
    </source>
</reference>
<reference key="4">
    <citation type="journal article" date="1999" name="Mol. Gen. Genet.">
        <title>Identification of nuclear genes encoding mitochondrial proteins: isolation of a collection of D. melanogaster cDNAs homologous to sequences in the Human Gene Index database.</title>
        <authorList>
            <person name="Caggese C."/>
            <person name="Ragone G."/>
            <person name="Perrini B."/>
            <person name="Moschetti R."/>
            <person name="de Pinto V."/>
            <person name="Caizzi R."/>
            <person name="Barsanti P."/>
        </authorList>
    </citation>
    <scope>NUCLEOTIDE SEQUENCE [MRNA] OF 1-169</scope>
    <source>
        <tissue>Ovary</tissue>
    </source>
</reference>
<protein>
    <recommendedName>
        <fullName>ATP synthase subunit gamma, mitochondrial</fullName>
    </recommendedName>
    <alternativeName>
        <fullName>F-ATPase gamma subunit</fullName>
    </alternativeName>
</protein>